<proteinExistence type="inferred from homology"/>
<sequence length="314" mass="33532">MTEPLRIVFAGTPEFAAEHLKALLDSPHQIVAVYTQPDRPAGRGQKLMPSPVKQLALQHDIPVMQPPTLRAPEAQAELAALKPDLMVVVAYGLILPQVVLDIPRLGCINSHASLLPRWRGAAPIQRAVQAGDAESGVTVMRMEAGLDTGPMLLKAVTPISAQDTGGTLHDRLAELGPPAVLQAIAGLAEGSLVGEAQDDSLANYAHKLNKDEARIDWTRPADELERLVRAFNPWPICHSTLNEEALKVLAADLAEGQGAPGTILSASKDGLIVACGQNALRLTRLQLPGGKPLNFTDLFNSRREKFAIGTVLGQ</sequence>
<evidence type="ECO:0000255" key="1">
    <source>
        <dbReference type="HAMAP-Rule" id="MF_00182"/>
    </source>
</evidence>
<protein>
    <recommendedName>
        <fullName evidence="1">Methionyl-tRNA formyltransferase</fullName>
        <ecNumber evidence="1">2.1.2.9</ecNumber>
    </recommendedName>
</protein>
<keyword id="KW-0648">Protein biosynthesis</keyword>
<keyword id="KW-1185">Reference proteome</keyword>
<keyword id="KW-0808">Transferase</keyword>
<name>FMT_PSESM</name>
<organism>
    <name type="scientific">Pseudomonas syringae pv. tomato (strain ATCC BAA-871 / DC3000)</name>
    <dbReference type="NCBI Taxonomy" id="223283"/>
    <lineage>
        <taxon>Bacteria</taxon>
        <taxon>Pseudomonadati</taxon>
        <taxon>Pseudomonadota</taxon>
        <taxon>Gammaproteobacteria</taxon>
        <taxon>Pseudomonadales</taxon>
        <taxon>Pseudomonadaceae</taxon>
        <taxon>Pseudomonas</taxon>
    </lineage>
</organism>
<feature type="chain" id="PRO_0000083019" description="Methionyl-tRNA formyltransferase">
    <location>
        <begin position="1"/>
        <end position="314"/>
    </location>
</feature>
<feature type="binding site" evidence="1">
    <location>
        <begin position="113"/>
        <end position="116"/>
    </location>
    <ligand>
        <name>(6S)-5,6,7,8-tetrahydrofolate</name>
        <dbReference type="ChEBI" id="CHEBI:57453"/>
    </ligand>
</feature>
<reference key="1">
    <citation type="journal article" date="2003" name="Proc. Natl. Acad. Sci. U.S.A.">
        <title>The complete genome sequence of the Arabidopsis and tomato pathogen Pseudomonas syringae pv. tomato DC3000.</title>
        <authorList>
            <person name="Buell C.R."/>
            <person name="Joardar V."/>
            <person name="Lindeberg M."/>
            <person name="Selengut J."/>
            <person name="Paulsen I.T."/>
            <person name="Gwinn M.L."/>
            <person name="Dodson R.J."/>
            <person name="DeBoy R.T."/>
            <person name="Durkin A.S."/>
            <person name="Kolonay J.F."/>
            <person name="Madupu R."/>
            <person name="Daugherty S.C."/>
            <person name="Brinkac L.M."/>
            <person name="Beanan M.J."/>
            <person name="Haft D.H."/>
            <person name="Nelson W.C."/>
            <person name="Davidsen T.M."/>
            <person name="Zafar N."/>
            <person name="Zhou L."/>
            <person name="Liu J."/>
            <person name="Yuan Q."/>
            <person name="Khouri H.M."/>
            <person name="Fedorova N.B."/>
            <person name="Tran B."/>
            <person name="Russell D."/>
            <person name="Berry K.J."/>
            <person name="Utterback T.R."/>
            <person name="Van Aken S.E."/>
            <person name="Feldblyum T.V."/>
            <person name="D'Ascenzo M."/>
            <person name="Deng W.-L."/>
            <person name="Ramos A.R."/>
            <person name="Alfano J.R."/>
            <person name="Cartinhour S."/>
            <person name="Chatterjee A.K."/>
            <person name="Delaney T.P."/>
            <person name="Lazarowitz S.G."/>
            <person name="Martin G.B."/>
            <person name="Schneider D.J."/>
            <person name="Tang X."/>
            <person name="Bender C.L."/>
            <person name="White O."/>
            <person name="Fraser C.M."/>
            <person name="Collmer A."/>
        </authorList>
    </citation>
    <scope>NUCLEOTIDE SEQUENCE [LARGE SCALE GENOMIC DNA]</scope>
    <source>
        <strain>ATCC BAA-871 / DC3000</strain>
    </source>
</reference>
<dbReference type="EC" id="2.1.2.9" evidence="1"/>
<dbReference type="EMBL" id="AE016853">
    <property type="protein sequence ID" value="AAO53732.1"/>
    <property type="molecule type" value="Genomic_DNA"/>
</dbReference>
<dbReference type="RefSeq" id="NP_790037.1">
    <property type="nucleotide sequence ID" value="NC_004578.1"/>
</dbReference>
<dbReference type="RefSeq" id="WP_005768186.1">
    <property type="nucleotide sequence ID" value="NC_004578.1"/>
</dbReference>
<dbReference type="SMR" id="Q88B42"/>
<dbReference type="STRING" id="223283.PSPTO_0178"/>
<dbReference type="GeneID" id="1181786"/>
<dbReference type="KEGG" id="pst:PSPTO_0178"/>
<dbReference type="PATRIC" id="fig|223283.9.peg.184"/>
<dbReference type="eggNOG" id="COG0223">
    <property type="taxonomic scope" value="Bacteria"/>
</dbReference>
<dbReference type="HOGENOM" id="CLU_033347_1_2_6"/>
<dbReference type="OrthoDB" id="9802815at2"/>
<dbReference type="PhylomeDB" id="Q88B42"/>
<dbReference type="Proteomes" id="UP000002515">
    <property type="component" value="Chromosome"/>
</dbReference>
<dbReference type="GO" id="GO:0005829">
    <property type="term" value="C:cytosol"/>
    <property type="evidence" value="ECO:0007669"/>
    <property type="project" value="TreeGrafter"/>
</dbReference>
<dbReference type="GO" id="GO:0004479">
    <property type="term" value="F:methionyl-tRNA formyltransferase activity"/>
    <property type="evidence" value="ECO:0007669"/>
    <property type="project" value="UniProtKB-UniRule"/>
</dbReference>
<dbReference type="CDD" id="cd08646">
    <property type="entry name" value="FMT_core_Met-tRNA-FMT_N"/>
    <property type="match status" value="1"/>
</dbReference>
<dbReference type="CDD" id="cd08704">
    <property type="entry name" value="Met_tRNA_FMT_C"/>
    <property type="match status" value="1"/>
</dbReference>
<dbReference type="FunFam" id="3.40.50.170:FF:000003">
    <property type="entry name" value="Methionyl-tRNA formyltransferase"/>
    <property type="match status" value="1"/>
</dbReference>
<dbReference type="Gene3D" id="3.10.25.10">
    <property type="entry name" value="Formyl transferase, C-terminal domain"/>
    <property type="match status" value="1"/>
</dbReference>
<dbReference type="Gene3D" id="3.40.50.170">
    <property type="entry name" value="Formyl transferase, N-terminal domain"/>
    <property type="match status" value="1"/>
</dbReference>
<dbReference type="HAMAP" id="MF_00182">
    <property type="entry name" value="Formyl_trans"/>
    <property type="match status" value="1"/>
</dbReference>
<dbReference type="InterPro" id="IPR005794">
    <property type="entry name" value="Fmt"/>
</dbReference>
<dbReference type="InterPro" id="IPR005793">
    <property type="entry name" value="Formyl_trans_C"/>
</dbReference>
<dbReference type="InterPro" id="IPR037022">
    <property type="entry name" value="Formyl_trans_C_sf"/>
</dbReference>
<dbReference type="InterPro" id="IPR002376">
    <property type="entry name" value="Formyl_transf_N"/>
</dbReference>
<dbReference type="InterPro" id="IPR036477">
    <property type="entry name" value="Formyl_transf_N_sf"/>
</dbReference>
<dbReference type="InterPro" id="IPR011034">
    <property type="entry name" value="Formyl_transferase-like_C_sf"/>
</dbReference>
<dbReference type="InterPro" id="IPR001555">
    <property type="entry name" value="GART_AS"/>
</dbReference>
<dbReference type="InterPro" id="IPR044135">
    <property type="entry name" value="Met-tRNA-FMT_C"/>
</dbReference>
<dbReference type="InterPro" id="IPR041711">
    <property type="entry name" value="Met-tRNA-FMT_N"/>
</dbReference>
<dbReference type="NCBIfam" id="TIGR00460">
    <property type="entry name" value="fmt"/>
    <property type="match status" value="1"/>
</dbReference>
<dbReference type="PANTHER" id="PTHR11138">
    <property type="entry name" value="METHIONYL-TRNA FORMYLTRANSFERASE"/>
    <property type="match status" value="1"/>
</dbReference>
<dbReference type="PANTHER" id="PTHR11138:SF5">
    <property type="entry name" value="METHIONYL-TRNA FORMYLTRANSFERASE, MITOCHONDRIAL"/>
    <property type="match status" value="1"/>
</dbReference>
<dbReference type="Pfam" id="PF02911">
    <property type="entry name" value="Formyl_trans_C"/>
    <property type="match status" value="1"/>
</dbReference>
<dbReference type="Pfam" id="PF00551">
    <property type="entry name" value="Formyl_trans_N"/>
    <property type="match status" value="1"/>
</dbReference>
<dbReference type="SUPFAM" id="SSF50486">
    <property type="entry name" value="FMT C-terminal domain-like"/>
    <property type="match status" value="1"/>
</dbReference>
<dbReference type="SUPFAM" id="SSF53328">
    <property type="entry name" value="Formyltransferase"/>
    <property type="match status" value="1"/>
</dbReference>
<dbReference type="PROSITE" id="PS00373">
    <property type="entry name" value="GART"/>
    <property type="match status" value="1"/>
</dbReference>
<gene>
    <name evidence="1" type="primary">fmt</name>
    <name type="ordered locus">PSPTO_0178</name>
</gene>
<accession>Q88B42</accession>
<comment type="function">
    <text evidence="1">Attaches a formyl group to the free amino group of methionyl-tRNA(fMet). The formyl group appears to play a dual role in the initiator identity of N-formylmethionyl-tRNA by promoting its recognition by IF2 and preventing the misappropriation of this tRNA by the elongation apparatus.</text>
</comment>
<comment type="catalytic activity">
    <reaction evidence="1">
        <text>L-methionyl-tRNA(fMet) + (6R)-10-formyltetrahydrofolate = N-formyl-L-methionyl-tRNA(fMet) + (6S)-5,6,7,8-tetrahydrofolate + H(+)</text>
        <dbReference type="Rhea" id="RHEA:24380"/>
        <dbReference type="Rhea" id="RHEA-COMP:9952"/>
        <dbReference type="Rhea" id="RHEA-COMP:9953"/>
        <dbReference type="ChEBI" id="CHEBI:15378"/>
        <dbReference type="ChEBI" id="CHEBI:57453"/>
        <dbReference type="ChEBI" id="CHEBI:78530"/>
        <dbReference type="ChEBI" id="CHEBI:78844"/>
        <dbReference type="ChEBI" id="CHEBI:195366"/>
        <dbReference type="EC" id="2.1.2.9"/>
    </reaction>
</comment>
<comment type="similarity">
    <text evidence="1">Belongs to the Fmt family.</text>
</comment>